<feature type="chain" id="PRO_0000372644" description="Glycogen-binding subunit 76A">
    <location>
        <begin position="1"/>
        <end position="681"/>
    </location>
</feature>
<feature type="domain" description="CBM21" evidence="1">
    <location>
        <begin position="525"/>
        <end position="632"/>
    </location>
</feature>
<feature type="region of interest" description="Disordered" evidence="2">
    <location>
        <begin position="1"/>
        <end position="20"/>
    </location>
</feature>
<feature type="region of interest" description="Disordered" evidence="2">
    <location>
        <begin position="53"/>
        <end position="94"/>
    </location>
</feature>
<feature type="region of interest" description="Disordered" evidence="2">
    <location>
        <begin position="232"/>
        <end position="251"/>
    </location>
</feature>
<feature type="region of interest" description="Disordered" evidence="2">
    <location>
        <begin position="285"/>
        <end position="391"/>
    </location>
</feature>
<feature type="region of interest" description="Disordered" evidence="2">
    <location>
        <begin position="405"/>
        <end position="435"/>
    </location>
</feature>
<feature type="compositionally biased region" description="Acidic residues" evidence="2">
    <location>
        <begin position="59"/>
        <end position="69"/>
    </location>
</feature>
<feature type="compositionally biased region" description="Polar residues" evidence="2">
    <location>
        <begin position="72"/>
        <end position="91"/>
    </location>
</feature>
<feature type="compositionally biased region" description="Basic and acidic residues" evidence="2">
    <location>
        <begin position="237"/>
        <end position="251"/>
    </location>
</feature>
<feature type="compositionally biased region" description="Basic and acidic residues" evidence="2">
    <location>
        <begin position="297"/>
        <end position="308"/>
    </location>
</feature>
<feature type="compositionally biased region" description="Basic and acidic residues" evidence="2">
    <location>
        <begin position="321"/>
        <end position="336"/>
    </location>
</feature>
<feature type="compositionally biased region" description="Polar residues" evidence="2">
    <location>
        <begin position="353"/>
        <end position="364"/>
    </location>
</feature>
<feature type="compositionally biased region" description="Basic and acidic residues" evidence="2">
    <location>
        <begin position="365"/>
        <end position="374"/>
    </location>
</feature>
<feature type="modified residue" description="Phosphothreonine" evidence="3">
    <location>
        <position position="545"/>
    </location>
</feature>
<feature type="modified residue" description="Phosphoserine" evidence="3">
    <location>
        <position position="547"/>
    </location>
</feature>
<feature type="modified residue" description="Phosphoserine" evidence="3">
    <location>
        <position position="549"/>
    </location>
</feature>
<feature type="sequence conflict" description="In Ref. 4; AAL39375." evidence="4" ref="4">
    <original>S</original>
    <variation>G</variation>
    <location>
        <position position="669"/>
    </location>
</feature>
<gene>
    <name type="primary">Gbs-76A</name>
    <name type="ORF">CG9619</name>
</gene>
<comment type="sequence caution" evidence="4">
    <conflict type="erroneous initiation">
        <sequence resource="EMBL-CDS" id="AAL39375"/>
    </conflict>
    <text>Truncated N-terminus.</text>
</comment>
<name>GBS76_DROME</name>
<reference key="1">
    <citation type="journal article" date="2000" name="Science">
        <title>The genome sequence of Drosophila melanogaster.</title>
        <authorList>
            <person name="Adams M.D."/>
            <person name="Celniker S.E."/>
            <person name="Holt R.A."/>
            <person name="Evans C.A."/>
            <person name="Gocayne J.D."/>
            <person name="Amanatides P.G."/>
            <person name="Scherer S.E."/>
            <person name="Li P.W."/>
            <person name="Hoskins R.A."/>
            <person name="Galle R.F."/>
            <person name="George R.A."/>
            <person name="Lewis S.E."/>
            <person name="Richards S."/>
            <person name="Ashburner M."/>
            <person name="Henderson S.N."/>
            <person name="Sutton G.G."/>
            <person name="Wortman J.R."/>
            <person name="Yandell M.D."/>
            <person name="Zhang Q."/>
            <person name="Chen L.X."/>
            <person name="Brandon R.C."/>
            <person name="Rogers Y.-H.C."/>
            <person name="Blazej R.G."/>
            <person name="Champe M."/>
            <person name="Pfeiffer B.D."/>
            <person name="Wan K.H."/>
            <person name="Doyle C."/>
            <person name="Baxter E.G."/>
            <person name="Helt G."/>
            <person name="Nelson C.R."/>
            <person name="Miklos G.L.G."/>
            <person name="Abril J.F."/>
            <person name="Agbayani A."/>
            <person name="An H.-J."/>
            <person name="Andrews-Pfannkoch C."/>
            <person name="Baldwin D."/>
            <person name="Ballew R.M."/>
            <person name="Basu A."/>
            <person name="Baxendale J."/>
            <person name="Bayraktaroglu L."/>
            <person name="Beasley E.M."/>
            <person name="Beeson K.Y."/>
            <person name="Benos P.V."/>
            <person name="Berman B.P."/>
            <person name="Bhandari D."/>
            <person name="Bolshakov S."/>
            <person name="Borkova D."/>
            <person name="Botchan M.R."/>
            <person name="Bouck J."/>
            <person name="Brokstein P."/>
            <person name="Brottier P."/>
            <person name="Burtis K.C."/>
            <person name="Busam D.A."/>
            <person name="Butler H."/>
            <person name="Cadieu E."/>
            <person name="Center A."/>
            <person name="Chandra I."/>
            <person name="Cherry J.M."/>
            <person name="Cawley S."/>
            <person name="Dahlke C."/>
            <person name="Davenport L.B."/>
            <person name="Davies P."/>
            <person name="de Pablos B."/>
            <person name="Delcher A."/>
            <person name="Deng Z."/>
            <person name="Mays A.D."/>
            <person name="Dew I."/>
            <person name="Dietz S.M."/>
            <person name="Dodson K."/>
            <person name="Doup L.E."/>
            <person name="Downes M."/>
            <person name="Dugan-Rocha S."/>
            <person name="Dunkov B.C."/>
            <person name="Dunn P."/>
            <person name="Durbin K.J."/>
            <person name="Evangelista C.C."/>
            <person name="Ferraz C."/>
            <person name="Ferriera S."/>
            <person name="Fleischmann W."/>
            <person name="Fosler C."/>
            <person name="Gabrielian A.E."/>
            <person name="Garg N.S."/>
            <person name="Gelbart W.M."/>
            <person name="Glasser K."/>
            <person name="Glodek A."/>
            <person name="Gong F."/>
            <person name="Gorrell J.H."/>
            <person name="Gu Z."/>
            <person name="Guan P."/>
            <person name="Harris M."/>
            <person name="Harris N.L."/>
            <person name="Harvey D.A."/>
            <person name="Heiman T.J."/>
            <person name="Hernandez J.R."/>
            <person name="Houck J."/>
            <person name="Hostin D."/>
            <person name="Houston K.A."/>
            <person name="Howland T.J."/>
            <person name="Wei M.-H."/>
            <person name="Ibegwam C."/>
            <person name="Jalali M."/>
            <person name="Kalush F."/>
            <person name="Karpen G.H."/>
            <person name="Ke Z."/>
            <person name="Kennison J.A."/>
            <person name="Ketchum K.A."/>
            <person name="Kimmel B.E."/>
            <person name="Kodira C.D."/>
            <person name="Kraft C.L."/>
            <person name="Kravitz S."/>
            <person name="Kulp D."/>
            <person name="Lai Z."/>
            <person name="Lasko P."/>
            <person name="Lei Y."/>
            <person name="Levitsky A.A."/>
            <person name="Li J.H."/>
            <person name="Li Z."/>
            <person name="Liang Y."/>
            <person name="Lin X."/>
            <person name="Liu X."/>
            <person name="Mattei B."/>
            <person name="McIntosh T.C."/>
            <person name="McLeod M.P."/>
            <person name="McPherson D."/>
            <person name="Merkulov G."/>
            <person name="Milshina N.V."/>
            <person name="Mobarry C."/>
            <person name="Morris J."/>
            <person name="Moshrefi A."/>
            <person name="Mount S.M."/>
            <person name="Moy M."/>
            <person name="Murphy B."/>
            <person name="Murphy L."/>
            <person name="Muzny D.M."/>
            <person name="Nelson D.L."/>
            <person name="Nelson D.R."/>
            <person name="Nelson K.A."/>
            <person name="Nixon K."/>
            <person name="Nusskern D.R."/>
            <person name="Pacleb J.M."/>
            <person name="Palazzolo M."/>
            <person name="Pittman G.S."/>
            <person name="Pan S."/>
            <person name="Pollard J."/>
            <person name="Puri V."/>
            <person name="Reese M.G."/>
            <person name="Reinert K."/>
            <person name="Remington K."/>
            <person name="Saunders R.D.C."/>
            <person name="Scheeler F."/>
            <person name="Shen H."/>
            <person name="Shue B.C."/>
            <person name="Siden-Kiamos I."/>
            <person name="Simpson M."/>
            <person name="Skupski M.P."/>
            <person name="Smith T.J."/>
            <person name="Spier E."/>
            <person name="Spradling A.C."/>
            <person name="Stapleton M."/>
            <person name="Strong R."/>
            <person name="Sun E."/>
            <person name="Svirskas R."/>
            <person name="Tector C."/>
            <person name="Turner R."/>
            <person name="Venter E."/>
            <person name="Wang A.H."/>
            <person name="Wang X."/>
            <person name="Wang Z.-Y."/>
            <person name="Wassarman D.A."/>
            <person name="Weinstock G.M."/>
            <person name="Weissenbach J."/>
            <person name="Williams S.M."/>
            <person name="Woodage T."/>
            <person name="Worley K.C."/>
            <person name="Wu D."/>
            <person name="Yang S."/>
            <person name="Yao Q.A."/>
            <person name="Ye J."/>
            <person name="Yeh R.-F."/>
            <person name="Zaveri J.S."/>
            <person name="Zhan M."/>
            <person name="Zhang G."/>
            <person name="Zhao Q."/>
            <person name="Zheng L."/>
            <person name="Zheng X.H."/>
            <person name="Zhong F.N."/>
            <person name="Zhong W."/>
            <person name="Zhou X."/>
            <person name="Zhu S.C."/>
            <person name="Zhu X."/>
            <person name="Smith H.O."/>
            <person name="Gibbs R.A."/>
            <person name="Myers E.W."/>
            <person name="Rubin G.M."/>
            <person name="Venter J.C."/>
        </authorList>
    </citation>
    <scope>NUCLEOTIDE SEQUENCE [LARGE SCALE GENOMIC DNA]</scope>
    <source>
        <strain>Berkeley</strain>
    </source>
</reference>
<reference key="2">
    <citation type="journal article" date="2002" name="Genome Biol.">
        <title>Annotation of the Drosophila melanogaster euchromatic genome: a systematic review.</title>
        <authorList>
            <person name="Misra S."/>
            <person name="Crosby M.A."/>
            <person name="Mungall C.J."/>
            <person name="Matthews B.B."/>
            <person name="Campbell K.S."/>
            <person name="Hradecky P."/>
            <person name="Huang Y."/>
            <person name="Kaminker J.S."/>
            <person name="Millburn G.H."/>
            <person name="Prochnik S.E."/>
            <person name="Smith C.D."/>
            <person name="Tupy J.L."/>
            <person name="Whitfield E.J."/>
            <person name="Bayraktaroglu L."/>
            <person name="Berman B.P."/>
            <person name="Bettencourt B.R."/>
            <person name="Celniker S.E."/>
            <person name="de Grey A.D.N.J."/>
            <person name="Drysdale R.A."/>
            <person name="Harris N.L."/>
            <person name="Richter J."/>
            <person name="Russo S."/>
            <person name="Schroeder A.J."/>
            <person name="Shu S.Q."/>
            <person name="Stapleton M."/>
            <person name="Yamada C."/>
            <person name="Ashburner M."/>
            <person name="Gelbart W.M."/>
            <person name="Rubin G.M."/>
            <person name="Lewis S.E."/>
        </authorList>
    </citation>
    <scope>GENOME REANNOTATION</scope>
    <source>
        <strain>Berkeley</strain>
    </source>
</reference>
<reference key="3">
    <citation type="submission" date="2009-04" db="EMBL/GenBank/DDBJ databases">
        <authorList>
            <person name="Carlson J.W."/>
            <person name="Booth B."/>
            <person name="Frise E."/>
            <person name="Park S."/>
            <person name="Wan K.H."/>
            <person name="Yu C."/>
            <person name="Celniker S.E."/>
        </authorList>
    </citation>
    <scope>NUCLEOTIDE SEQUENCE [LARGE SCALE MRNA]</scope>
    <source>
        <strain>Berkeley</strain>
        <tissue>Head</tissue>
    </source>
</reference>
<reference key="4">
    <citation type="journal article" date="2002" name="Genome Biol.">
        <title>A Drosophila full-length cDNA resource.</title>
        <authorList>
            <person name="Stapleton M."/>
            <person name="Carlson J.W."/>
            <person name="Brokstein P."/>
            <person name="Yu C."/>
            <person name="Champe M."/>
            <person name="George R.A."/>
            <person name="Guarin H."/>
            <person name="Kronmiller B."/>
            <person name="Pacleb J.M."/>
            <person name="Park S."/>
            <person name="Wan K.H."/>
            <person name="Rubin G.M."/>
            <person name="Celniker S.E."/>
        </authorList>
    </citation>
    <scope>NUCLEOTIDE SEQUENCE [LARGE SCALE MRNA] OF 245-681</scope>
    <source>
        <strain>Berkeley</strain>
        <tissue>Head</tissue>
    </source>
</reference>
<reference key="5">
    <citation type="journal article" date="2007" name="Mol. Biosyst.">
        <title>An integrated chemical, mass spectrometric and computational strategy for (quantitative) phosphoproteomics: application to Drosophila melanogaster Kc167 cells.</title>
        <authorList>
            <person name="Bodenmiller B."/>
            <person name="Mueller L.N."/>
            <person name="Pedrioli P.G.A."/>
            <person name="Pflieger D."/>
            <person name="Juenger M.A."/>
            <person name="Eng J.K."/>
            <person name="Aebersold R."/>
            <person name="Tao W.A."/>
        </authorList>
    </citation>
    <scope>PHOSPHORYLATION [LARGE SCALE ANALYSIS] AT THR-545; SER-547 AND SER-549</scope>
    <scope>IDENTIFICATION BY MASS SPECTROMETRY</scope>
</reference>
<keyword id="KW-0597">Phosphoprotein</keyword>
<keyword id="KW-1185">Reference proteome</keyword>
<evidence type="ECO:0000255" key="1">
    <source>
        <dbReference type="PROSITE-ProRule" id="PRU00491"/>
    </source>
</evidence>
<evidence type="ECO:0000256" key="2">
    <source>
        <dbReference type="SAM" id="MobiDB-lite"/>
    </source>
</evidence>
<evidence type="ECO:0000269" key="3">
    <source>
    </source>
</evidence>
<evidence type="ECO:0000305" key="4"/>
<accession>Q9VVY3</accession>
<accession>C3KGL1</accession>
<accession>Q8T0I8</accession>
<proteinExistence type="evidence at protein level"/>
<dbReference type="EMBL" id="AE014296">
    <property type="protein sequence ID" value="AAF49172.1"/>
    <property type="molecule type" value="Genomic_DNA"/>
</dbReference>
<dbReference type="EMBL" id="BT082076">
    <property type="protein sequence ID" value="ACP31593.1"/>
    <property type="molecule type" value="mRNA"/>
</dbReference>
<dbReference type="EMBL" id="AY069230">
    <property type="protein sequence ID" value="AAL39375.1"/>
    <property type="status" value="ALT_INIT"/>
    <property type="molecule type" value="mRNA"/>
</dbReference>
<dbReference type="RefSeq" id="NP_001262043.1">
    <property type="nucleotide sequence ID" value="NM_001275114.1"/>
</dbReference>
<dbReference type="RefSeq" id="NP_001262044.1">
    <property type="nucleotide sequence ID" value="NM_001275115.1"/>
</dbReference>
<dbReference type="RefSeq" id="NP_001287118.1">
    <property type="nucleotide sequence ID" value="NM_001300189.1"/>
</dbReference>
<dbReference type="RefSeq" id="NP_649104.1">
    <property type="nucleotide sequence ID" value="NM_140847.2"/>
</dbReference>
<dbReference type="SMR" id="Q9VVY3"/>
<dbReference type="BioGRID" id="65378">
    <property type="interactions" value="5"/>
</dbReference>
<dbReference type="FunCoup" id="Q9VVY3">
    <property type="interactions" value="3"/>
</dbReference>
<dbReference type="IntAct" id="Q9VVY3">
    <property type="interactions" value="5"/>
</dbReference>
<dbReference type="STRING" id="7227.FBpp0311540"/>
<dbReference type="CAZy" id="CBM21">
    <property type="family name" value="Carbohydrate-Binding Module Family 21"/>
</dbReference>
<dbReference type="GlyGen" id="Q9VVY3">
    <property type="glycosylation" value="1 site"/>
</dbReference>
<dbReference type="iPTMnet" id="Q9VVY3"/>
<dbReference type="PaxDb" id="7227-FBpp0304465"/>
<dbReference type="DNASU" id="40102"/>
<dbReference type="EnsemblMetazoa" id="FBtr0075014">
    <property type="protein sequence ID" value="FBpp0074781"/>
    <property type="gene ID" value="FBgn0036862"/>
</dbReference>
<dbReference type="EnsemblMetazoa" id="FBtr0331425">
    <property type="protein sequence ID" value="FBpp0303842"/>
    <property type="gene ID" value="FBgn0036862"/>
</dbReference>
<dbReference type="EnsemblMetazoa" id="FBtr0332155">
    <property type="protein sequence ID" value="FBpp0304465"/>
    <property type="gene ID" value="FBgn0036862"/>
</dbReference>
<dbReference type="EnsemblMetazoa" id="FBtr0345390">
    <property type="protein sequence ID" value="FBpp0311540"/>
    <property type="gene ID" value="FBgn0036862"/>
</dbReference>
<dbReference type="GeneID" id="40102"/>
<dbReference type="KEGG" id="dme:Dmel_CG9619"/>
<dbReference type="UCSC" id="CG9619-RA">
    <property type="organism name" value="d. melanogaster"/>
</dbReference>
<dbReference type="AGR" id="FB:FBgn0036862"/>
<dbReference type="CTD" id="40102"/>
<dbReference type="FlyBase" id="FBgn0036862">
    <property type="gene designation" value="Gbs-76A"/>
</dbReference>
<dbReference type="VEuPathDB" id="VectorBase:FBgn0036862"/>
<dbReference type="eggNOG" id="KOG3986">
    <property type="taxonomic scope" value="Eukaryota"/>
</dbReference>
<dbReference type="HOGENOM" id="CLU_016437_0_0_1"/>
<dbReference type="InParanoid" id="Q9VVY3"/>
<dbReference type="OMA" id="NAHESEQ"/>
<dbReference type="OrthoDB" id="8942186at2759"/>
<dbReference type="PhylomeDB" id="Q9VVY3"/>
<dbReference type="BioGRID-ORCS" id="40102">
    <property type="hits" value="0 hits in 3 CRISPR screens"/>
</dbReference>
<dbReference type="GenomeRNAi" id="40102"/>
<dbReference type="PRO" id="PR:Q9VVY3"/>
<dbReference type="Proteomes" id="UP000000803">
    <property type="component" value="Chromosome 3L"/>
</dbReference>
<dbReference type="Bgee" id="FBgn0036862">
    <property type="expression patterns" value="Expressed in indirect flight muscle cell (Drosophila) in body wall and 162 other cell types or tissues"/>
</dbReference>
<dbReference type="ExpressionAtlas" id="Q9VVY3">
    <property type="expression patterns" value="baseline and differential"/>
</dbReference>
<dbReference type="GO" id="GO:0000164">
    <property type="term" value="C:protein phosphatase type 1 complex"/>
    <property type="evidence" value="ECO:0000250"/>
    <property type="project" value="FlyBase"/>
</dbReference>
<dbReference type="GO" id="GO:2001069">
    <property type="term" value="F:glycogen binding"/>
    <property type="evidence" value="ECO:0000318"/>
    <property type="project" value="GO_Central"/>
</dbReference>
<dbReference type="GO" id="GO:0008157">
    <property type="term" value="F:protein phosphatase 1 binding"/>
    <property type="evidence" value="ECO:0000353"/>
    <property type="project" value="FlyBase"/>
</dbReference>
<dbReference type="GO" id="GO:0045818">
    <property type="term" value="P:negative regulation of glycogen catabolic process"/>
    <property type="evidence" value="ECO:0000250"/>
    <property type="project" value="FlyBase"/>
</dbReference>
<dbReference type="GO" id="GO:0045725">
    <property type="term" value="P:positive regulation of glycogen biosynthetic process"/>
    <property type="evidence" value="ECO:0000250"/>
    <property type="project" value="FlyBase"/>
</dbReference>
<dbReference type="GO" id="GO:0005979">
    <property type="term" value="P:regulation of glycogen biosynthetic process"/>
    <property type="evidence" value="ECO:0000318"/>
    <property type="project" value="GO_Central"/>
</dbReference>
<dbReference type="FunFam" id="2.60.40.2440:FF:000006">
    <property type="entry name" value="Uncharacterized protein, isoform A"/>
    <property type="match status" value="1"/>
</dbReference>
<dbReference type="Gene3D" id="2.60.40.2440">
    <property type="entry name" value="Carbohydrate binding type-21 domain"/>
    <property type="match status" value="1"/>
</dbReference>
<dbReference type="InterPro" id="IPR005036">
    <property type="entry name" value="CBM21_dom"/>
</dbReference>
<dbReference type="InterPro" id="IPR038175">
    <property type="entry name" value="CBM21_dom_sf"/>
</dbReference>
<dbReference type="InterPro" id="IPR050782">
    <property type="entry name" value="PP1_regulatory_subunit_3"/>
</dbReference>
<dbReference type="PANTHER" id="PTHR12307:SF36">
    <property type="entry name" value="GLYCOGEN-BINDING SUBUNIT 76A"/>
    <property type="match status" value="1"/>
</dbReference>
<dbReference type="PANTHER" id="PTHR12307">
    <property type="entry name" value="PROTEIN PHOSPHATASE 1 REGULATORY SUBUNIT"/>
    <property type="match status" value="1"/>
</dbReference>
<dbReference type="Pfam" id="PF03370">
    <property type="entry name" value="CBM_21"/>
    <property type="match status" value="1"/>
</dbReference>
<dbReference type="PROSITE" id="PS51159">
    <property type="entry name" value="CBM21"/>
    <property type="match status" value="1"/>
</dbReference>
<protein>
    <recommendedName>
        <fullName>Glycogen-binding subunit 76A</fullName>
    </recommendedName>
    <alternativeName>
        <fullName>CBM21 domain-containing protein CG9619</fullName>
    </alternativeName>
</protein>
<organism>
    <name type="scientific">Drosophila melanogaster</name>
    <name type="common">Fruit fly</name>
    <dbReference type="NCBI Taxonomy" id="7227"/>
    <lineage>
        <taxon>Eukaryota</taxon>
        <taxon>Metazoa</taxon>
        <taxon>Ecdysozoa</taxon>
        <taxon>Arthropoda</taxon>
        <taxon>Hexapoda</taxon>
        <taxon>Insecta</taxon>
        <taxon>Pterygota</taxon>
        <taxon>Neoptera</taxon>
        <taxon>Endopterygota</taxon>
        <taxon>Diptera</taxon>
        <taxon>Brachycera</taxon>
        <taxon>Muscomorpha</taxon>
        <taxon>Ephydroidea</taxon>
        <taxon>Drosophilidae</taxon>
        <taxon>Drosophila</taxon>
        <taxon>Sophophora</taxon>
    </lineage>
</organism>
<sequence>MNDPGDIPLTHTSTPDSRPPCSIISIIPTIGMSSCRGRAEAFARSLSSKLRTLGSQTTEEGEGNAEDEPIINGTSTNTWVNSHDSEQTVTDLQPLRHESDSFFDFDCELESPGSPVDECEYLRLIETASNTPHNSTAESGYACASMASSHSSSNDGPYFDASASTSTAAAAQDQTLPASEHKEYVNTLQLNGKHGLANGVQEEQPAFQDDVQEDEAFLQAQILNELQKHSNSLTEVEQTKPEEGKLTNGHLEKVEELELKDVLEVAGTTNRAPKVIAAPQEVEAFADRSQEQSPNDRVQKESSQERVPEGTPFEGVQGESPSDRVQTDASDERVQEEISNDTVQVESNHKSATESISTEVTTLERSPEESRNDELSPDSGVDETDKSASNLTVDVDLAQIEQAKQDATEAVEKSGAPSRGTTVDTTDDEDDCRPQRIRRCSSLKTGKTPPGTPGRKKIVRFADVLGLDLADVKTFLDEIPTIPKSAFEDLEILESEPPLQLGPKSDKLLMPLFQQPGGLPKFLDAVREKQVSLENAAVTDNINQTISGSVRVRNLDFHKSVHIRYSLDGWRSYADLQANYVENSCDGFSDIFTFVLFGNSLHVGQRLEFAVRFQCKGQQFWDNNYGANYCFQCLPSSTHTAGGSTASPPSVATGAVSTGHSASLVGLLSPTAGDAWCSSFY</sequence>